<dbReference type="EMBL" id="AP006716">
    <property type="protein sequence ID" value="BAE05352.1"/>
    <property type="molecule type" value="Genomic_DNA"/>
</dbReference>
<dbReference type="RefSeq" id="WP_011276307.1">
    <property type="nucleotide sequence ID" value="NC_007168.1"/>
</dbReference>
<dbReference type="SMR" id="Q4L4S3"/>
<dbReference type="KEGG" id="sha:SH2043"/>
<dbReference type="eggNOG" id="COG3237">
    <property type="taxonomic scope" value="Bacteria"/>
</dbReference>
<dbReference type="HOGENOM" id="CLU_135567_0_3_9"/>
<dbReference type="OrthoDB" id="2134937at2"/>
<dbReference type="Proteomes" id="UP000000543">
    <property type="component" value="Chromosome"/>
</dbReference>
<dbReference type="Gene3D" id="1.10.1470.10">
    <property type="entry name" value="YjbJ"/>
    <property type="match status" value="1"/>
</dbReference>
<dbReference type="InterPro" id="IPR008462">
    <property type="entry name" value="CsbD"/>
</dbReference>
<dbReference type="InterPro" id="IPR036629">
    <property type="entry name" value="YjbJ_sf"/>
</dbReference>
<dbReference type="Pfam" id="PF05532">
    <property type="entry name" value="CsbD"/>
    <property type="match status" value="1"/>
</dbReference>
<dbReference type="SUPFAM" id="SSF69047">
    <property type="entry name" value="Hypothetical protein YjbJ"/>
    <property type="match status" value="1"/>
</dbReference>
<name>Y2043_STAHJ</name>
<protein>
    <recommendedName>
        <fullName>UPF0337 protein SH2043</fullName>
    </recommendedName>
</protein>
<feature type="chain" id="PRO_0000272682" description="UPF0337 protein SH2043">
    <location>
        <begin position="1"/>
        <end position="64"/>
    </location>
</feature>
<feature type="region of interest" description="Disordered" evidence="1">
    <location>
        <begin position="1"/>
        <end position="64"/>
    </location>
</feature>
<feature type="compositionally biased region" description="Basic and acidic residues" evidence="1">
    <location>
        <begin position="22"/>
        <end position="64"/>
    </location>
</feature>
<accession>Q4L4S3</accession>
<organism>
    <name type="scientific">Staphylococcus haemolyticus (strain JCSC1435)</name>
    <dbReference type="NCBI Taxonomy" id="279808"/>
    <lineage>
        <taxon>Bacteria</taxon>
        <taxon>Bacillati</taxon>
        <taxon>Bacillota</taxon>
        <taxon>Bacilli</taxon>
        <taxon>Bacillales</taxon>
        <taxon>Staphylococcaceae</taxon>
        <taxon>Staphylococcus</taxon>
    </lineage>
</organism>
<comment type="similarity">
    <text evidence="2">Belongs to the UPF0337 (CsbD) family.</text>
</comment>
<reference key="1">
    <citation type="journal article" date="2005" name="J. Bacteriol.">
        <title>Whole-genome sequencing of Staphylococcus haemolyticus uncovers the extreme plasticity of its genome and the evolution of human-colonizing staphylococcal species.</title>
        <authorList>
            <person name="Takeuchi F."/>
            <person name="Watanabe S."/>
            <person name="Baba T."/>
            <person name="Yuzawa H."/>
            <person name="Ito T."/>
            <person name="Morimoto Y."/>
            <person name="Kuroda M."/>
            <person name="Cui L."/>
            <person name="Takahashi M."/>
            <person name="Ankai A."/>
            <person name="Baba S."/>
            <person name="Fukui S."/>
            <person name="Lee J.C."/>
            <person name="Hiramatsu K."/>
        </authorList>
    </citation>
    <scope>NUCLEOTIDE SEQUENCE [LARGE SCALE GENOMIC DNA]</scope>
    <source>
        <strain>JCSC1435</strain>
    </source>
</reference>
<proteinExistence type="inferred from homology"/>
<gene>
    <name type="ordered locus">SH2043</name>
</gene>
<evidence type="ECO:0000256" key="1">
    <source>
        <dbReference type="SAM" id="MobiDB-lite"/>
    </source>
</evidence>
<evidence type="ECO:0000305" key="2"/>
<sequence length="64" mass="7019">MAEDKFEQAKGNLKETVGNVTDNKDLEKEGQNDKASGKAKEAVENVKNKANDLIDKVKGNNDNK</sequence>